<name>MMP14_HUMAN</name>
<comment type="function">
    <text evidence="3 7 12 13 14 15 18 22">Endopeptidase that degrades various components of the extracellular matrix such as collagen (PubMed:8015608). Essential for pericellular collagenolysis and modeling of skeletal and extraskeletal connective tissues during development (By similarity). Activates progelatinase A/MMP2, thereby acting as a positive regulator of cell growth and migration (PubMed:22065321, PubMed:8015608). Involved in the formation of the fibrovascular tissues in association with pro-MMP2 (PubMed:12714657, PubMed:22065321). May be involved in actin cytoskeleton reorganization by cleaving PTK7 (PubMed:20837484). Acts as a regulator of Notch signaling by mediating cleavage and inhibition of DLL1 (PubMed:21572390). Cleaves ADGRB1 to release vasculostatin-40 which inhibits angiogenesis (PubMed:22330140). Acts as a negative regulator of the GDF15-GFRAL aversive response by mediating cleavage and inactivation of GFRAL (PubMed:35177851).</text>
</comment>
<comment type="catalytic activity">
    <reaction evidence="18 22">
        <text>Endopeptidase activity. Activates progelatinase A by cleavage of the propeptide at 37-Asn-|-Leu-38. Other bonds hydrolyzed include 35-Gly-|-Ile-36 in the propeptide of collagenase 3, and 341-Asn-|-Phe-342, 441-Asp-|-Leu-442 and 354-Gln-|-Thr-355 in the aggrecan interglobular domain.</text>
        <dbReference type="EC" id="3.4.24.80"/>
    </reaction>
</comment>
<comment type="cofactor">
    <cofactor evidence="24">
        <name>Zn(2+)</name>
        <dbReference type="ChEBI" id="CHEBI:29105"/>
    </cofactor>
    <text evidence="24">Binds 1 zinc ion per subunit.</text>
</comment>
<comment type="cofactor">
    <cofactor evidence="24">
        <name>Ca(2+)</name>
        <dbReference type="ChEBI" id="CHEBI:29108"/>
    </cofactor>
</comment>
<comment type="subunit">
    <text evidence="14 24">Interacts (via C-terminal cytoplasmic tail) with BST2.</text>
</comment>
<comment type="interaction">
    <interactant intactId="EBI-992788">
        <id>P50281</id>
    </interactant>
    <interactant intactId="EBI-992807">
        <id>Q9BV57</id>
        <label>ADI1</label>
    </interactant>
    <organismsDiffer>false</organismsDiffer>
    <experiments>4</experiments>
</comment>
<comment type="interaction">
    <interactant intactId="EBI-992788">
        <id>P50281</id>
    </interactant>
    <interactant intactId="EBI-13059134">
        <id>Q13520</id>
        <label>AQP6</label>
    </interactant>
    <organismsDiffer>false</organismsDiffer>
    <experiments>3</experiments>
</comment>
<comment type="interaction">
    <interactant intactId="EBI-992788">
        <id>P50281</id>
    </interactant>
    <interactant intactId="EBI-702093">
        <id>P56945</id>
        <label>BCAR1</label>
    </interactant>
    <organismsDiffer>false</organismsDiffer>
    <experiments>3</experiments>
</comment>
<comment type="interaction">
    <interactant intactId="EBI-992788">
        <id>P50281</id>
    </interactant>
    <interactant intactId="EBI-3915253">
        <id>Q15125</id>
        <label>EBP</label>
    </interactant>
    <organismsDiffer>false</organismsDiffer>
    <experiments>3</experiments>
</comment>
<comment type="interaction">
    <interactant intactId="EBI-992788">
        <id>P50281</id>
    </interactant>
    <interactant intactId="EBI-18535450">
        <id>Q9GZR5</id>
        <label>ELOVL4</label>
    </interactant>
    <organismsDiffer>false</organismsDiffer>
    <experiments>3</experiments>
</comment>
<comment type="interaction">
    <interactant intactId="EBI-992788">
        <id>P50281</id>
    </interactant>
    <interactant intactId="EBI-742600">
        <id>Q9Y624</id>
        <label>F11R</label>
    </interactant>
    <organismsDiffer>false</organismsDiffer>
    <experiments>3</experiments>
</comment>
<comment type="interaction">
    <interactant intactId="EBI-992788">
        <id>P50281</id>
    </interactant>
    <interactant intactId="EBI-6256193">
        <id>P22455</id>
        <label>FGFR4</label>
    </interactant>
    <organismsDiffer>false</organismsDiffer>
    <experiments>6</experiments>
</comment>
<comment type="interaction">
    <interactant intactId="EBI-992788">
        <id>P50281</id>
    </interactant>
    <interactant intactId="EBI-741101">
        <id>Q13643</id>
        <label>FHL3</label>
    </interactant>
    <organismsDiffer>false</organismsDiffer>
    <experiments>3</experiments>
</comment>
<comment type="interaction">
    <interactant intactId="EBI-992788">
        <id>P50281</id>
    </interactant>
    <interactant intactId="EBI-1056807">
        <id>P09958</id>
        <label>FURIN</label>
    </interactant>
    <organismsDiffer>false</organismsDiffer>
    <experiments>3</experiments>
</comment>
<comment type="interaction">
    <interactant intactId="EBI-992788">
        <id>P50281</id>
    </interactant>
    <interactant intactId="EBI-18053395">
        <id>Q7Z5P4</id>
        <label>HSD17B13</label>
    </interactant>
    <organismsDiffer>false</organismsDiffer>
    <experiments>3</experiments>
</comment>
<comment type="interaction">
    <interactant intactId="EBI-992788">
        <id>P50281</id>
    </interactant>
    <interactant intactId="EBI-749265">
        <id>Q8N6L0</id>
        <label>KASH5</label>
    </interactant>
    <organismsDiffer>false</organismsDiffer>
    <experiments>3</experiments>
</comment>
<comment type="interaction">
    <interactant intactId="EBI-992788">
        <id>P50281</id>
    </interactant>
    <interactant intactId="EBI-444403">
        <id>P53667</id>
        <label>LIMK1</label>
    </interactant>
    <organismsDiffer>false</organismsDiffer>
    <experiments>4</experiments>
</comment>
<comment type="interaction">
    <interactant intactId="EBI-992788">
        <id>P50281</id>
    </interactant>
    <interactant intactId="EBI-725780">
        <id>P51884</id>
        <label>LUM</label>
    </interactant>
    <organismsDiffer>false</organismsDiffer>
    <experiments>2</experiments>
</comment>
<comment type="interaction">
    <interactant intactId="EBI-992788">
        <id>P50281</id>
    </interactant>
    <interactant intactId="EBI-949102">
        <id>Q15800</id>
        <label>MSMO1</label>
    </interactant>
    <organismsDiffer>false</organismsDiffer>
    <experiments>3</experiments>
</comment>
<comment type="interaction">
    <interactant intactId="EBI-992788">
        <id>P50281</id>
    </interactant>
    <interactant intactId="EBI-1211440">
        <id>P27105</id>
        <label>STOM</label>
    </interactant>
    <organismsDiffer>false</organismsDiffer>
    <experiments>3</experiments>
</comment>
<comment type="interaction">
    <interactant intactId="EBI-992788">
        <id>P50281</id>
    </interactant>
    <interactant intactId="EBI-1033507">
        <id>P16035</id>
        <label>TIMP2</label>
    </interactant>
    <organismsDiffer>false</organismsDiffer>
    <experiments>4</experiments>
</comment>
<comment type="interaction">
    <interactant intactId="EBI-992788">
        <id>P50281</id>
    </interactant>
    <interactant intactId="EBI-744706">
        <id>Q96AP4</id>
        <label>ZUP1</label>
    </interactant>
    <organismsDiffer>false</organismsDiffer>
    <experiments>3</experiments>
</comment>
<comment type="interaction">
    <interactant intactId="EBI-992788">
        <id>P50281</id>
    </interactant>
    <interactant intactId="EBI-4422912">
        <id>Q9R064</id>
        <label>Gorasp2</label>
    </interactant>
    <organismsDiffer>true</organismsDiffer>
    <experiments>14</experiments>
</comment>
<comment type="subcellular location">
    <subcellularLocation>
        <location evidence="22">Cell membrane</location>
        <topology evidence="28">Single-pass type I membrane protein</topology>
    </subcellularLocation>
    <subcellularLocation>
        <location evidence="10">Melanosome</location>
    </subcellularLocation>
    <subcellularLocation>
        <location evidence="14">Cytoplasm</location>
    </subcellularLocation>
    <text evidence="10">Identified by mass spectrometry in melanosome fractions from stage I to stage IV (PubMed:17081065). Forms a complex with BST2 and localizes to the cytoplasm (PubMed:17081065).</text>
</comment>
<comment type="tissue specificity">
    <text evidence="11">Expressed in stromal cells of colon, breast, and head and neck. Expressed in lung tumors.</text>
</comment>
<comment type="induction">
    <text evidence="11">Up-regulated by NANOS1.</text>
</comment>
<comment type="domain">
    <text evidence="1">The conserved cysteine present in the cysteine-switch motif binds the catalytic zinc ion, thus inhibiting the enzyme. The dissociation of the cysteine from the zinc ion upon the activation-peptide release activates the enzyme.</text>
</comment>
<comment type="PTM">
    <text evidence="23">The precursor is cleaved by a furin endopeptidase.</text>
</comment>
<comment type="PTM">
    <text evidence="17">Tyrosine phosphorylated by PKDCC/VLK.</text>
</comment>
<comment type="disease" evidence="16">
    <disease id="DI-03898">
        <name>Winchester syndrome</name>
        <acronym>WNCHRS</acronym>
        <description>A disease characterized by severe osteolysis in the hands and feet, generalized osteoporosis, bone thinning, and absence of subcutaneous nodules. Various additional features include coarse face, corneal opacities, gum hypertrophy, and EKG changes.</description>
        <dbReference type="MIM" id="277950"/>
    </disease>
    <text>The disease is caused by variants affecting the gene represented in this entry.</text>
</comment>
<comment type="similarity">
    <text evidence="28">Belongs to the peptidase M10A family.</text>
</comment>
<comment type="online information" name="Atlas of Genetics and Cytogenetics in Oncology and Haematology">
    <link uri="https://atlasgeneticsoncology.org/gene/41391/MMP14"/>
</comment>
<protein>
    <recommendedName>
        <fullName>Matrix metalloproteinase-14</fullName>
        <shortName>MMP-14</shortName>
        <ecNumber evidence="18 22">3.4.24.80</ecNumber>
    </recommendedName>
    <alternativeName>
        <fullName>MMP-X1</fullName>
    </alternativeName>
    <alternativeName>
        <fullName>Membrane-type matrix metalloproteinase 1</fullName>
        <shortName>MT-MMP 1</shortName>
        <shortName>MTMMP1</shortName>
    </alternativeName>
    <alternativeName>
        <fullName evidence="27">Membrane-type-1 matrix metalloproteinase</fullName>
        <shortName evidence="27">MT1-MMP</shortName>
        <shortName evidence="27">MT1MMP</shortName>
    </alternativeName>
</protein>
<keyword id="KW-0002">3D-structure</keyword>
<keyword id="KW-0106">Calcium</keyword>
<keyword id="KW-1003">Cell membrane</keyword>
<keyword id="KW-0165">Cleavage on pair of basic residues</keyword>
<keyword id="KW-0963">Cytoplasm</keyword>
<keyword id="KW-0903">Direct protein sequencing</keyword>
<keyword id="KW-0225">Disease variant</keyword>
<keyword id="KW-1015">Disulfide bond</keyword>
<keyword id="KW-0378">Hydrolase</keyword>
<keyword id="KW-0472">Membrane</keyword>
<keyword id="KW-0479">Metal-binding</keyword>
<keyword id="KW-0482">Metalloprotease</keyword>
<keyword id="KW-1285">Osteoporosis</keyword>
<keyword id="KW-0597">Phosphoprotein</keyword>
<keyword id="KW-0645">Protease</keyword>
<keyword id="KW-1267">Proteomics identification</keyword>
<keyword id="KW-1185">Reference proteome</keyword>
<keyword id="KW-0677">Repeat</keyword>
<keyword id="KW-0732">Signal</keyword>
<keyword id="KW-0812">Transmembrane</keyword>
<keyword id="KW-1133">Transmembrane helix</keyword>
<keyword id="KW-0862">Zinc</keyword>
<keyword id="KW-0865">Zymogen</keyword>
<dbReference type="EC" id="3.4.24.80" evidence="18 22"/>
<dbReference type="EMBL" id="D26512">
    <property type="protein sequence ID" value="BAA05519.1"/>
    <property type="molecule type" value="mRNA"/>
</dbReference>
<dbReference type="EMBL" id="X83535">
    <property type="protein sequence ID" value="CAA58519.1"/>
    <property type="molecule type" value="mRNA"/>
</dbReference>
<dbReference type="EMBL" id="Z48481">
    <property type="protein sequence ID" value="CAA88372.1"/>
    <property type="molecule type" value="mRNA"/>
</dbReference>
<dbReference type="EMBL" id="U41078">
    <property type="protein sequence ID" value="AAA83770.1"/>
    <property type="molecule type" value="mRNA"/>
</dbReference>
<dbReference type="EMBL" id="X90925">
    <property type="protein sequence ID" value="CAA62432.1"/>
    <property type="molecule type" value="mRNA"/>
</dbReference>
<dbReference type="EMBL" id="AK291325">
    <property type="protein sequence ID" value="BAF84014.1"/>
    <property type="molecule type" value="mRNA"/>
</dbReference>
<dbReference type="EMBL" id="AY795074">
    <property type="protein sequence ID" value="AAV40837.1"/>
    <property type="molecule type" value="Genomic_DNA"/>
</dbReference>
<dbReference type="EMBL" id="AL135998">
    <property type="status" value="NOT_ANNOTATED_CDS"/>
    <property type="molecule type" value="Genomic_DNA"/>
</dbReference>
<dbReference type="EMBL" id="BC064803">
    <property type="protein sequence ID" value="AAH64803.1"/>
    <property type="molecule type" value="mRNA"/>
</dbReference>
<dbReference type="CCDS" id="CCDS9577.1"/>
<dbReference type="PIR" id="I38028">
    <property type="entry name" value="I38028"/>
</dbReference>
<dbReference type="RefSeq" id="NP_004986.1">
    <property type="nucleotide sequence ID" value="NM_004995.4"/>
</dbReference>
<dbReference type="PDB" id="1BQQ">
    <property type="method" value="X-ray"/>
    <property type="resolution" value="2.75 A"/>
    <property type="chains" value="M=114-287"/>
</dbReference>
<dbReference type="PDB" id="1BUV">
    <property type="method" value="X-ray"/>
    <property type="resolution" value="2.75 A"/>
    <property type="chains" value="M=114-287"/>
</dbReference>
<dbReference type="PDB" id="2MQS">
    <property type="method" value="NMR"/>
    <property type="chains" value="A=316-511"/>
</dbReference>
<dbReference type="PDB" id="3C7X">
    <property type="method" value="X-ray"/>
    <property type="resolution" value="1.70 A"/>
    <property type="chains" value="A=316-511"/>
</dbReference>
<dbReference type="PDB" id="3MA2">
    <property type="method" value="X-ray"/>
    <property type="resolution" value="2.05 A"/>
    <property type="chains" value="A/D=112-292"/>
</dbReference>
<dbReference type="PDB" id="3X23">
    <property type="method" value="X-ray"/>
    <property type="resolution" value="2.40 A"/>
    <property type="chains" value="B=563-582"/>
</dbReference>
<dbReference type="PDB" id="4P3C">
    <property type="method" value="X-ray"/>
    <property type="resolution" value="1.94 A"/>
    <property type="chains" value="M=215-227"/>
</dbReference>
<dbReference type="PDB" id="4P3D">
    <property type="method" value="X-ray"/>
    <property type="resolution" value="1.95 A"/>
    <property type="chains" value="C/M=215-227"/>
</dbReference>
<dbReference type="PDB" id="4QXU">
    <property type="method" value="X-ray"/>
    <property type="resolution" value="2.30 A"/>
    <property type="chains" value="K=218-228"/>
</dbReference>
<dbReference type="PDB" id="5H0U">
    <property type="method" value="X-ray"/>
    <property type="resolution" value="2.24 A"/>
    <property type="chains" value="A=116-285"/>
</dbReference>
<dbReference type="PDB" id="6CLZ">
    <property type="method" value="NMR"/>
    <property type="chains" value="A=316-511"/>
</dbReference>
<dbReference type="PDB" id="6CM1">
    <property type="method" value="NMR"/>
    <property type="chains" value="A=316-511"/>
</dbReference>
<dbReference type="PDBsum" id="1BQQ"/>
<dbReference type="PDBsum" id="1BUV"/>
<dbReference type="PDBsum" id="2MQS"/>
<dbReference type="PDBsum" id="3C7X"/>
<dbReference type="PDBsum" id="3MA2"/>
<dbReference type="PDBsum" id="3X23"/>
<dbReference type="PDBsum" id="4P3C"/>
<dbReference type="PDBsum" id="4P3D"/>
<dbReference type="PDBsum" id="4QXU"/>
<dbReference type="PDBsum" id="5H0U"/>
<dbReference type="PDBsum" id="6CLZ"/>
<dbReference type="PDBsum" id="6CM1"/>
<dbReference type="BMRB" id="P50281"/>
<dbReference type="SMR" id="P50281"/>
<dbReference type="BioGRID" id="110466">
    <property type="interactions" value="72"/>
</dbReference>
<dbReference type="CORUM" id="P50281"/>
<dbReference type="DIP" id="DIP-35111N"/>
<dbReference type="FunCoup" id="P50281">
    <property type="interactions" value="940"/>
</dbReference>
<dbReference type="IntAct" id="P50281">
    <property type="interactions" value="63"/>
</dbReference>
<dbReference type="MINT" id="P50281"/>
<dbReference type="STRING" id="9606.ENSP00000308208"/>
<dbReference type="BindingDB" id="P50281"/>
<dbReference type="ChEMBL" id="CHEMBL3869"/>
<dbReference type="DrugBank" id="DB07145">
    <property type="generic name" value="(2R)-N-HYDROXY-2-[(3S)-3-METHYL-3-{4-[(2-METHYLQUINOLIN-4-YL)METHOXY]PHENYL}-2-OXOPYRROLIDIN-1-YL]PROPANAMIDE"/>
</dbReference>
<dbReference type="DrugBank" id="DB07556">
    <property type="generic name" value="CGS-27023"/>
</dbReference>
<dbReference type="DrugBank" id="DB12116">
    <property type="generic name" value="Epigallocatechin gallate"/>
</dbReference>
<dbReference type="DrugBank" id="DB02255">
    <property type="generic name" value="Ilomastat"/>
</dbReference>
<dbReference type="DrugBank" id="DB00786">
    <property type="generic name" value="Marimastat"/>
</dbReference>
<dbReference type="DrugCentral" id="P50281"/>
<dbReference type="GuidetoPHARMACOLOGY" id="1638"/>
<dbReference type="MEROPS" id="M10.014"/>
<dbReference type="TCDB" id="8.B.14.2.3">
    <property type="family name" value="the sea anemone peptide toxin, class 1 (bgk) family"/>
</dbReference>
<dbReference type="GlyCosmos" id="P50281">
    <property type="glycosylation" value="1 site, 1 glycan"/>
</dbReference>
<dbReference type="GlyGen" id="P50281">
    <property type="glycosylation" value="7 sites, 3 O-linked glycans (7 sites)"/>
</dbReference>
<dbReference type="iPTMnet" id="P50281"/>
<dbReference type="PhosphoSitePlus" id="P50281"/>
<dbReference type="SwissPalm" id="P50281"/>
<dbReference type="BioMuta" id="MMP14"/>
<dbReference type="DMDM" id="317373419"/>
<dbReference type="jPOST" id="P50281"/>
<dbReference type="MassIVE" id="P50281"/>
<dbReference type="PaxDb" id="9606-ENSP00000308208"/>
<dbReference type="PeptideAtlas" id="P50281"/>
<dbReference type="ProteomicsDB" id="56213"/>
<dbReference type="Pumba" id="P50281"/>
<dbReference type="ABCD" id="P50281">
    <property type="antibodies" value="1 sequenced antibody"/>
</dbReference>
<dbReference type="Antibodypedia" id="4088">
    <property type="antibodies" value="1096 antibodies from 44 providers"/>
</dbReference>
<dbReference type="DNASU" id="4323"/>
<dbReference type="Ensembl" id="ENST00000311852.11">
    <property type="protein sequence ID" value="ENSP00000308208.6"/>
    <property type="gene ID" value="ENSG00000157227.14"/>
</dbReference>
<dbReference type="GeneID" id="4323"/>
<dbReference type="KEGG" id="hsa:4323"/>
<dbReference type="MANE-Select" id="ENST00000311852.11">
    <property type="protein sequence ID" value="ENSP00000308208.6"/>
    <property type="RefSeq nucleotide sequence ID" value="NM_004995.4"/>
    <property type="RefSeq protein sequence ID" value="NP_004986.1"/>
</dbReference>
<dbReference type="UCSC" id="uc001whc.5">
    <property type="organism name" value="human"/>
</dbReference>
<dbReference type="AGR" id="HGNC:7160"/>
<dbReference type="CTD" id="4323"/>
<dbReference type="DisGeNET" id="4323"/>
<dbReference type="GeneCards" id="MMP14"/>
<dbReference type="HGNC" id="HGNC:7160">
    <property type="gene designation" value="MMP14"/>
</dbReference>
<dbReference type="HPA" id="ENSG00000157227">
    <property type="expression patterns" value="Low tissue specificity"/>
</dbReference>
<dbReference type="MalaCards" id="MMP14"/>
<dbReference type="MIM" id="277950">
    <property type="type" value="phenotype"/>
</dbReference>
<dbReference type="MIM" id="600754">
    <property type="type" value="gene"/>
</dbReference>
<dbReference type="neXtProt" id="NX_P50281"/>
<dbReference type="OpenTargets" id="ENSG00000157227"/>
<dbReference type="Orphanet" id="371428">
    <property type="disease" value="Multicentric osteolysis-nodulosis-arthropathy spectrum"/>
</dbReference>
<dbReference type="PharmGKB" id="PA30872"/>
<dbReference type="VEuPathDB" id="HostDB:ENSG00000157227"/>
<dbReference type="eggNOG" id="KOG1565">
    <property type="taxonomic scope" value="Eukaryota"/>
</dbReference>
<dbReference type="GeneTree" id="ENSGT00940000157808"/>
<dbReference type="HOGENOM" id="CLU_015489_8_1_1"/>
<dbReference type="InParanoid" id="P50281"/>
<dbReference type="OMA" id="EPQADIM"/>
<dbReference type="OrthoDB" id="406838at2759"/>
<dbReference type="PAN-GO" id="P50281">
    <property type="GO annotations" value="5 GO annotations based on evolutionary models"/>
</dbReference>
<dbReference type="PhylomeDB" id="P50281"/>
<dbReference type="TreeFam" id="TF352396"/>
<dbReference type="BioCyc" id="MetaCyc:ENSG00000157227-MONOMER"/>
<dbReference type="BRENDA" id="3.4.24.80">
    <property type="organism ID" value="2681"/>
</dbReference>
<dbReference type="BRENDA" id="3.4.24.B5">
    <property type="organism ID" value="2681"/>
</dbReference>
<dbReference type="PathwayCommons" id="P50281"/>
<dbReference type="Reactome" id="R-HSA-1442490">
    <property type="pathway name" value="Collagen degradation"/>
</dbReference>
<dbReference type="Reactome" id="R-HSA-1474228">
    <property type="pathway name" value="Degradation of the extracellular matrix"/>
</dbReference>
<dbReference type="Reactome" id="R-HSA-1592389">
    <property type="pathway name" value="Activation of Matrix Metalloproteinases"/>
</dbReference>
<dbReference type="Reactome" id="R-HSA-9839383">
    <property type="pathway name" value="TGFBR3 PTM regulation"/>
</dbReference>
<dbReference type="Reactome" id="R-HSA-9856530">
    <property type="pathway name" value="High laminar flow shear stress activates signaling by PIEZO1 and PECAM1:CDH5:KDR in endothelial cells"/>
</dbReference>
<dbReference type="SignaLink" id="P50281"/>
<dbReference type="SIGNOR" id="P50281"/>
<dbReference type="BioGRID-ORCS" id="4323">
    <property type="hits" value="13 hits in 1164 CRISPR screens"/>
</dbReference>
<dbReference type="CD-CODE" id="8C2F96ED">
    <property type="entry name" value="Centrosome"/>
</dbReference>
<dbReference type="ChiTaRS" id="MMP14">
    <property type="organism name" value="human"/>
</dbReference>
<dbReference type="EvolutionaryTrace" id="P50281"/>
<dbReference type="GeneWiki" id="MMP14"/>
<dbReference type="GenomeRNAi" id="4323"/>
<dbReference type="Pharos" id="P50281">
    <property type="development level" value="Tchem"/>
</dbReference>
<dbReference type="PRO" id="PR:P50281"/>
<dbReference type="Proteomes" id="UP000005640">
    <property type="component" value="Chromosome 14"/>
</dbReference>
<dbReference type="RNAct" id="P50281">
    <property type="molecule type" value="protein"/>
</dbReference>
<dbReference type="Bgee" id="ENSG00000157227">
    <property type="expression patterns" value="Expressed in stromal cell of endometrium and 163 other cell types or tissues"/>
</dbReference>
<dbReference type="ExpressionAtlas" id="P50281">
    <property type="expression patterns" value="baseline and differential"/>
</dbReference>
<dbReference type="GO" id="GO:0031410">
    <property type="term" value="C:cytoplasmic vesicle"/>
    <property type="evidence" value="ECO:0000314"/>
    <property type="project" value="UniProtKB"/>
</dbReference>
<dbReference type="GO" id="GO:0005829">
    <property type="term" value="C:cytosol"/>
    <property type="evidence" value="ECO:0000314"/>
    <property type="project" value="HPA"/>
</dbReference>
<dbReference type="GO" id="GO:0031012">
    <property type="term" value="C:extracellular matrix"/>
    <property type="evidence" value="ECO:0007669"/>
    <property type="project" value="InterPro"/>
</dbReference>
<dbReference type="GO" id="GO:0005615">
    <property type="term" value="C:extracellular space"/>
    <property type="evidence" value="ECO:0000315"/>
    <property type="project" value="CAFA"/>
</dbReference>
<dbReference type="GO" id="GO:0005925">
    <property type="term" value="C:focal adhesion"/>
    <property type="evidence" value="ECO:0007005"/>
    <property type="project" value="UniProtKB"/>
</dbReference>
<dbReference type="GO" id="GO:0005796">
    <property type="term" value="C:Golgi lumen"/>
    <property type="evidence" value="ECO:0000304"/>
    <property type="project" value="Reactome"/>
</dbReference>
<dbReference type="GO" id="GO:0045111">
    <property type="term" value="C:intermediate filament cytoskeleton"/>
    <property type="evidence" value="ECO:0000314"/>
    <property type="project" value="HPA"/>
</dbReference>
<dbReference type="GO" id="GO:0044354">
    <property type="term" value="C:macropinosome"/>
    <property type="evidence" value="ECO:0000314"/>
    <property type="project" value="UniProtKB"/>
</dbReference>
<dbReference type="GO" id="GO:0042470">
    <property type="term" value="C:melanosome"/>
    <property type="evidence" value="ECO:0007669"/>
    <property type="project" value="UniProtKB-SubCell"/>
</dbReference>
<dbReference type="GO" id="GO:0005634">
    <property type="term" value="C:nucleus"/>
    <property type="evidence" value="ECO:0000315"/>
    <property type="project" value="CAFA"/>
</dbReference>
<dbReference type="GO" id="GO:0005886">
    <property type="term" value="C:plasma membrane"/>
    <property type="evidence" value="ECO:0000314"/>
    <property type="project" value="UniProtKB"/>
</dbReference>
<dbReference type="GO" id="GO:0004175">
    <property type="term" value="F:endopeptidase activity"/>
    <property type="evidence" value="ECO:0000314"/>
    <property type="project" value="UniProtKB"/>
</dbReference>
<dbReference type="GO" id="GO:0005178">
    <property type="term" value="F:integrin binding"/>
    <property type="evidence" value="ECO:0007669"/>
    <property type="project" value="Ensembl"/>
</dbReference>
<dbReference type="GO" id="GO:0070006">
    <property type="term" value="F:metalloaminopeptidase activity"/>
    <property type="evidence" value="ECO:0000314"/>
    <property type="project" value="ParkinsonsUK-UCL"/>
</dbReference>
<dbReference type="GO" id="GO:0004222">
    <property type="term" value="F:metalloendopeptidase activity"/>
    <property type="evidence" value="ECO:0000314"/>
    <property type="project" value="UniProtKB"/>
</dbReference>
<dbReference type="GO" id="GO:0004252">
    <property type="term" value="F:serine-type endopeptidase activity"/>
    <property type="evidence" value="ECO:0000304"/>
    <property type="project" value="Reactome"/>
</dbReference>
<dbReference type="GO" id="GO:0008270">
    <property type="term" value="F:zinc ion binding"/>
    <property type="evidence" value="ECO:0000304"/>
    <property type="project" value="ProtInc"/>
</dbReference>
<dbReference type="GO" id="GO:0001525">
    <property type="term" value="P:angiogenesis"/>
    <property type="evidence" value="ECO:0007669"/>
    <property type="project" value="Ensembl"/>
</dbReference>
<dbReference type="GO" id="GO:0043615">
    <property type="term" value="P:astrocyte cell migration"/>
    <property type="evidence" value="ECO:0007669"/>
    <property type="project" value="Ensembl"/>
</dbReference>
<dbReference type="GO" id="GO:0048754">
    <property type="term" value="P:branching morphogenesis of an epithelial tube"/>
    <property type="evidence" value="ECO:0007669"/>
    <property type="project" value="Ensembl"/>
</dbReference>
<dbReference type="GO" id="GO:0048870">
    <property type="term" value="P:cell motility"/>
    <property type="evidence" value="ECO:0000304"/>
    <property type="project" value="ParkinsonsUK-UCL"/>
</dbReference>
<dbReference type="GO" id="GO:0035988">
    <property type="term" value="P:chondrocyte proliferation"/>
    <property type="evidence" value="ECO:0007669"/>
    <property type="project" value="Ensembl"/>
</dbReference>
<dbReference type="GO" id="GO:0030574">
    <property type="term" value="P:collagen catabolic process"/>
    <property type="evidence" value="ECO:0000318"/>
    <property type="project" value="GO_Central"/>
</dbReference>
<dbReference type="GO" id="GO:0097094">
    <property type="term" value="P:craniofacial suture morphogenesis"/>
    <property type="evidence" value="ECO:0007669"/>
    <property type="project" value="Ensembl"/>
</dbReference>
<dbReference type="GO" id="GO:0048701">
    <property type="term" value="P:embryonic cranial skeleton morphogenesis"/>
    <property type="evidence" value="ECO:0007669"/>
    <property type="project" value="Ensembl"/>
</dbReference>
<dbReference type="GO" id="GO:0001958">
    <property type="term" value="P:endochondral ossification"/>
    <property type="evidence" value="ECO:0007669"/>
    <property type="project" value="Ensembl"/>
</dbReference>
<dbReference type="GO" id="GO:0035987">
    <property type="term" value="P:endodermal cell differentiation"/>
    <property type="evidence" value="ECO:0000270"/>
    <property type="project" value="UniProtKB"/>
</dbReference>
<dbReference type="GO" id="GO:0001935">
    <property type="term" value="P:endothelial cell proliferation"/>
    <property type="evidence" value="ECO:0007669"/>
    <property type="project" value="Ensembl"/>
</dbReference>
<dbReference type="GO" id="GO:0022617">
    <property type="term" value="P:extracellular matrix disassembly"/>
    <property type="evidence" value="ECO:0000304"/>
    <property type="project" value="Reactome"/>
</dbReference>
<dbReference type="GO" id="GO:0030198">
    <property type="term" value="P:extracellular matrix organization"/>
    <property type="evidence" value="ECO:0000318"/>
    <property type="project" value="GO_Central"/>
</dbReference>
<dbReference type="GO" id="GO:0060322">
    <property type="term" value="P:head development"/>
    <property type="evidence" value="ECO:0007669"/>
    <property type="project" value="Ensembl"/>
</dbReference>
<dbReference type="GO" id="GO:0030324">
    <property type="term" value="P:lung development"/>
    <property type="evidence" value="ECO:0007669"/>
    <property type="project" value="Ensembl"/>
</dbReference>
<dbReference type="GO" id="GO:0008584">
    <property type="term" value="P:male gonad development"/>
    <property type="evidence" value="ECO:0007669"/>
    <property type="project" value="Ensembl"/>
</dbReference>
<dbReference type="GO" id="GO:0051895">
    <property type="term" value="P:negative regulation of focal adhesion assembly"/>
    <property type="evidence" value="ECO:0007669"/>
    <property type="project" value="Ensembl"/>
</dbReference>
<dbReference type="GO" id="GO:0160145">
    <property type="term" value="P:negative regulation of GDF15-GFRAL signaling pathway"/>
    <property type="evidence" value="ECO:0000314"/>
    <property type="project" value="UniProtKB"/>
</dbReference>
<dbReference type="GO" id="GO:0045746">
    <property type="term" value="P:negative regulation of Notch signaling pathway"/>
    <property type="evidence" value="ECO:0000250"/>
    <property type="project" value="UniProtKB"/>
</dbReference>
<dbReference type="GO" id="GO:0001541">
    <property type="term" value="P:ovarian follicle development"/>
    <property type="evidence" value="ECO:0007669"/>
    <property type="project" value="Ensembl"/>
</dbReference>
<dbReference type="GO" id="GO:0045579">
    <property type="term" value="P:positive regulation of B cell differentiation"/>
    <property type="evidence" value="ECO:0000250"/>
    <property type="project" value="UniProtKB"/>
</dbReference>
<dbReference type="GO" id="GO:0030307">
    <property type="term" value="P:positive regulation of cell growth"/>
    <property type="evidence" value="ECO:0000314"/>
    <property type="project" value="UniProtKB"/>
</dbReference>
<dbReference type="GO" id="GO:0030335">
    <property type="term" value="P:positive regulation of cell migration"/>
    <property type="evidence" value="ECO:0000314"/>
    <property type="project" value="UniProtKB"/>
</dbReference>
<dbReference type="GO" id="GO:1905523">
    <property type="term" value="P:positive regulation of macrophage migration"/>
    <property type="evidence" value="ECO:0007669"/>
    <property type="project" value="Ensembl"/>
</dbReference>
<dbReference type="GO" id="GO:0010831">
    <property type="term" value="P:positive regulation of myotube differentiation"/>
    <property type="evidence" value="ECO:0000250"/>
    <property type="project" value="UniProtKB"/>
</dbReference>
<dbReference type="GO" id="GO:0010954">
    <property type="term" value="P:positive regulation of protein processing"/>
    <property type="evidence" value="ECO:0007669"/>
    <property type="project" value="Ensembl"/>
</dbReference>
<dbReference type="GO" id="GO:0030163">
    <property type="term" value="P:protein catabolic process"/>
    <property type="evidence" value="ECO:0000314"/>
    <property type="project" value="UniProt"/>
</dbReference>
<dbReference type="GO" id="GO:0016485">
    <property type="term" value="P:protein processing"/>
    <property type="evidence" value="ECO:0000304"/>
    <property type="project" value="ParkinsonsUK-UCL"/>
</dbReference>
<dbReference type="GO" id="GO:0006508">
    <property type="term" value="P:proteolysis"/>
    <property type="evidence" value="ECO:0000314"/>
    <property type="project" value="ParkinsonsUK-UCL"/>
</dbReference>
<dbReference type="GO" id="GO:1903076">
    <property type="term" value="P:regulation of protein localization to plasma membrane"/>
    <property type="evidence" value="ECO:0000315"/>
    <property type="project" value="UniProtKB"/>
</dbReference>
<dbReference type="GO" id="GO:0043627">
    <property type="term" value="P:response to estrogen"/>
    <property type="evidence" value="ECO:0007669"/>
    <property type="project" value="Ensembl"/>
</dbReference>
<dbReference type="GO" id="GO:0001666">
    <property type="term" value="P:response to hypoxia"/>
    <property type="evidence" value="ECO:0007669"/>
    <property type="project" value="Ensembl"/>
</dbReference>
<dbReference type="GO" id="GO:0009612">
    <property type="term" value="P:response to mechanical stimulus"/>
    <property type="evidence" value="ECO:0007669"/>
    <property type="project" value="Ensembl"/>
</dbReference>
<dbReference type="GO" id="GO:1990834">
    <property type="term" value="P:response to odorant"/>
    <property type="evidence" value="ECO:0007669"/>
    <property type="project" value="Ensembl"/>
</dbReference>
<dbReference type="GO" id="GO:0006979">
    <property type="term" value="P:response to oxidative stress"/>
    <property type="evidence" value="ECO:0007669"/>
    <property type="project" value="Ensembl"/>
</dbReference>
<dbReference type="GO" id="GO:0001501">
    <property type="term" value="P:skeletal system development"/>
    <property type="evidence" value="ECO:0000318"/>
    <property type="project" value="GO_Central"/>
</dbReference>
<dbReference type="GO" id="GO:0048771">
    <property type="term" value="P:tissue remodeling"/>
    <property type="evidence" value="ECO:0007669"/>
    <property type="project" value="Ensembl"/>
</dbReference>
<dbReference type="GO" id="GO:0031638">
    <property type="term" value="P:zymogen activation"/>
    <property type="evidence" value="ECO:0000314"/>
    <property type="project" value="UniProtKB"/>
</dbReference>
<dbReference type="CDD" id="cd00094">
    <property type="entry name" value="HX"/>
    <property type="match status" value="1"/>
</dbReference>
<dbReference type="CDD" id="cd04278">
    <property type="entry name" value="ZnMc_MMP"/>
    <property type="match status" value="1"/>
</dbReference>
<dbReference type="FunFam" id="3.40.390.10:FF:000005">
    <property type="entry name" value="Matrix metallopeptidase 16"/>
    <property type="match status" value="1"/>
</dbReference>
<dbReference type="FunFam" id="2.110.10.10:FF:000001">
    <property type="entry name" value="Matrix metallopeptidase 24"/>
    <property type="match status" value="1"/>
</dbReference>
<dbReference type="FunFam" id="1.10.101.10:FF:000002">
    <property type="entry name" value="Matrix metalloproteinase-14 preproprotein"/>
    <property type="match status" value="1"/>
</dbReference>
<dbReference type="Gene3D" id="3.40.390.10">
    <property type="entry name" value="Collagenase (Catalytic Domain)"/>
    <property type="match status" value="1"/>
</dbReference>
<dbReference type="Gene3D" id="2.110.10.10">
    <property type="entry name" value="Hemopexin-like domain"/>
    <property type="match status" value="1"/>
</dbReference>
<dbReference type="Gene3D" id="1.10.101.10">
    <property type="entry name" value="PGBD-like superfamily/PGBD"/>
    <property type="match status" value="1"/>
</dbReference>
<dbReference type="InterPro" id="IPR000585">
    <property type="entry name" value="Hemopexin-like_dom"/>
</dbReference>
<dbReference type="InterPro" id="IPR036375">
    <property type="entry name" value="Hemopexin-like_dom_sf"/>
</dbReference>
<dbReference type="InterPro" id="IPR018487">
    <property type="entry name" value="Hemopexin-like_repeat"/>
</dbReference>
<dbReference type="InterPro" id="IPR018486">
    <property type="entry name" value="Hemopexin_CS"/>
</dbReference>
<dbReference type="InterPro" id="IPR033739">
    <property type="entry name" value="M10A_MMP"/>
</dbReference>
<dbReference type="InterPro" id="IPR024079">
    <property type="entry name" value="MetalloPept_cat_dom_sf"/>
</dbReference>
<dbReference type="InterPro" id="IPR001818">
    <property type="entry name" value="Pept_M10_metallopeptidase"/>
</dbReference>
<dbReference type="InterPro" id="IPR021190">
    <property type="entry name" value="Pept_M10A"/>
</dbReference>
<dbReference type="InterPro" id="IPR021805">
    <property type="entry name" value="Pept_M10A_metallopeptidase_C"/>
</dbReference>
<dbReference type="InterPro" id="IPR021158">
    <property type="entry name" value="Pept_M10A_Zn_BS"/>
</dbReference>
<dbReference type="InterPro" id="IPR006026">
    <property type="entry name" value="Peptidase_Metallo"/>
</dbReference>
<dbReference type="InterPro" id="IPR002477">
    <property type="entry name" value="Peptidoglycan-bd-like"/>
</dbReference>
<dbReference type="InterPro" id="IPR036365">
    <property type="entry name" value="PGBD-like_sf"/>
</dbReference>
<dbReference type="InterPro" id="IPR036366">
    <property type="entry name" value="PGBDSf"/>
</dbReference>
<dbReference type="PANTHER" id="PTHR10201">
    <property type="entry name" value="MATRIX METALLOPROTEINASE"/>
    <property type="match status" value="1"/>
</dbReference>
<dbReference type="PANTHER" id="PTHR10201:SF24">
    <property type="entry name" value="MATRIX METALLOPROTEINASE-14"/>
    <property type="match status" value="1"/>
</dbReference>
<dbReference type="Pfam" id="PF11857">
    <property type="entry name" value="DUF3377"/>
    <property type="match status" value="1"/>
</dbReference>
<dbReference type="Pfam" id="PF00045">
    <property type="entry name" value="Hemopexin"/>
    <property type="match status" value="4"/>
</dbReference>
<dbReference type="Pfam" id="PF00413">
    <property type="entry name" value="Peptidase_M10"/>
    <property type="match status" value="1"/>
</dbReference>
<dbReference type="Pfam" id="PF01471">
    <property type="entry name" value="PG_binding_1"/>
    <property type="match status" value="1"/>
</dbReference>
<dbReference type="PIRSF" id="PIRSF001191">
    <property type="entry name" value="Peptidase_M10A_matrix"/>
    <property type="match status" value="1"/>
</dbReference>
<dbReference type="PRINTS" id="PR00138">
    <property type="entry name" value="MATRIXIN"/>
</dbReference>
<dbReference type="SMART" id="SM00120">
    <property type="entry name" value="HX"/>
    <property type="match status" value="4"/>
</dbReference>
<dbReference type="SMART" id="SM00235">
    <property type="entry name" value="ZnMc"/>
    <property type="match status" value="1"/>
</dbReference>
<dbReference type="SUPFAM" id="SSF50923">
    <property type="entry name" value="Hemopexin-like domain"/>
    <property type="match status" value="1"/>
</dbReference>
<dbReference type="SUPFAM" id="SSF55486">
    <property type="entry name" value="Metalloproteases ('zincins'), catalytic domain"/>
    <property type="match status" value="1"/>
</dbReference>
<dbReference type="SUPFAM" id="SSF47090">
    <property type="entry name" value="PGBD-like"/>
    <property type="match status" value="1"/>
</dbReference>
<dbReference type="PROSITE" id="PS00546">
    <property type="entry name" value="CYSTEINE_SWITCH"/>
    <property type="match status" value="1"/>
</dbReference>
<dbReference type="PROSITE" id="PS00024">
    <property type="entry name" value="HEMOPEXIN"/>
    <property type="match status" value="1"/>
</dbReference>
<dbReference type="PROSITE" id="PS51642">
    <property type="entry name" value="HEMOPEXIN_2"/>
    <property type="match status" value="4"/>
</dbReference>
<dbReference type="PROSITE" id="PS00142">
    <property type="entry name" value="ZINC_PROTEASE"/>
    <property type="match status" value="1"/>
</dbReference>
<accession>P50281</accession>
<accession>A8K5L0</accession>
<accession>Q6GSF3</accession>
<accession>Q92678</accession>
<gene>
    <name type="primary">MMP14</name>
</gene>
<sequence>MSPAPRPPRCLLLPLLTLGTALASLGSAQSSSFSPEAWLQQYGYLPPGDLRTHTQRSPQSLSAAIAAMQKFYGLQVTGKADADTMKAMRRPRCGVPDKFGAEIKANVRRKRYAIQGLKWQHNEITFCIQNYTPKVGEYATYEAIRKAFRVWESATPLRFREVPYAYIREGHEKQADIMIFFAEGFHGDSTPFDGEGGFLAHAYFPGPNIGGDTHFDSAEPWTVRNEDLNGNDIFLVAVHELGHALGLEHSSDPSAIMAPFYQWMDTENFVLPDDDRRGIQQLYGGESGFPTKMPPQPRTTSRPSVPDKPKNPTYGPNICDGNFDTVAMLRGEMFVFKERWFWRVRNNQVMDGYPMPIGQFWRGLPASINTAYERKDGKFVFFKGDKHWVFDEASLEPGYPKHIKELGRGLPTDKIDAALFWMPNGKTYFFRGNKYYRFNEELRAVDSEYPKNIKVWEGIPESPRGSFMGSDEVFTYFYKGNKYWKFNNQKLKVEPGYPKSALRDWMGCPSGGRPDEGTEEETEVIIIEVDEEGGGAVSAAAVVLPVLLLLLVLAVGLAVFFFRRHGTPRRLLYCQRSLLDKV</sequence>
<reference key="1">
    <citation type="journal article" date="1994" name="Nature">
        <title>A matrix metalloproteinase expressed on the surface of invasive tumour cells.</title>
        <authorList>
            <person name="Sato H."/>
            <person name="Takino T."/>
            <person name="Okada Y."/>
            <person name="Cao J."/>
            <person name="Shinagawa A."/>
            <person name="Yamamoto E."/>
            <person name="Seiki M."/>
        </authorList>
    </citation>
    <scope>NUCLEOTIDE SEQUENCE [MRNA]</scope>
    <scope>FUNCTION</scope>
    <scope>CATALYTIC ACTIVITY</scope>
    <scope>SUBCELLULAR LOCATION</scope>
    <scope>VARIANT SER-8</scope>
    <source>
        <tissue>Placenta</tissue>
    </source>
</reference>
<reference key="2">
    <citation type="journal article" date="1995" name="Gene">
        <title>Cloning of a human gene potentially encoding a novel matrix metalloproteinase having a C-terminal transmembrane domain.</title>
        <authorList>
            <person name="Takino T."/>
            <person name="Sato H."/>
            <person name="Yamamoto E."/>
            <person name="Seiki M."/>
        </authorList>
    </citation>
    <scope>NUCLEOTIDE SEQUENCE [MRNA]</scope>
    <scope>VARIANT SER-8</scope>
    <source>
        <tissue>Placenta</tissue>
    </source>
</reference>
<reference key="3">
    <citation type="journal article" date="1995" name="Proc. Natl. Acad. Sci. U.S.A.">
        <title>Membrane-type matrix metalloproteinase (MT-MMP) gene is expressed in stromal cells of human colon, breast, and head and neck carcinomas.</title>
        <authorList>
            <person name="Okada A."/>
            <person name="Bellocq J.-P."/>
            <person name="Rouyer N."/>
            <person name="Chenard M.P."/>
            <person name="Rio M.C."/>
            <person name="Chambon P."/>
            <person name="Basset P."/>
        </authorList>
    </citation>
    <scope>NUCLEOTIDE SEQUENCE [MRNA]</scope>
    <scope>VARIANT SER-8</scope>
</reference>
<reference key="4">
    <citation type="journal article" date="1995" name="Eur. J. Biochem.">
        <title>cDNA sequence and mRNA tissue distribution of a novel human matrix metalloproteinase with a potential transmembrane segment.</title>
        <authorList>
            <person name="Will H."/>
            <person name="Hinzmann B."/>
        </authorList>
    </citation>
    <scope>NUCLEOTIDE SEQUENCE [MRNA]</scope>
    <scope>VARIANT SER-8</scope>
    <source>
        <tissue>Lung</tissue>
    </source>
</reference>
<reference key="5">
    <citation type="submission" date="1995-11" db="EMBL/GenBank/DDBJ databases">
        <authorList>
            <person name="Luo G.-X."/>
            <person name="Reisfeld R.A."/>
            <person name="Strongin A.Y."/>
        </authorList>
    </citation>
    <scope>NUCLEOTIDE SEQUENCE [MRNA]</scope>
</reference>
<reference key="6">
    <citation type="journal article" date="1996" name="Eur. J. Biochem.">
        <title>Regulation of membrane-type matrix metalloproteinase-1 expression by growth factors and phorbol 12-myristate 13-acetate.</title>
        <authorList>
            <person name="Lohi J.L."/>
            <person name="Westermarck J."/>
            <person name="Kaehaeri V.M."/>
            <person name="Keski-Oja J."/>
        </authorList>
    </citation>
    <scope>NUCLEOTIDE SEQUENCE [MRNA]</scope>
</reference>
<reference key="7">
    <citation type="journal article" date="2004" name="Nat. Genet.">
        <title>Complete sequencing and characterization of 21,243 full-length human cDNAs.</title>
        <authorList>
            <person name="Ota T."/>
            <person name="Suzuki Y."/>
            <person name="Nishikawa T."/>
            <person name="Otsuki T."/>
            <person name="Sugiyama T."/>
            <person name="Irie R."/>
            <person name="Wakamatsu A."/>
            <person name="Hayashi K."/>
            <person name="Sato H."/>
            <person name="Nagai K."/>
            <person name="Kimura K."/>
            <person name="Makita H."/>
            <person name="Sekine M."/>
            <person name="Obayashi M."/>
            <person name="Nishi T."/>
            <person name="Shibahara T."/>
            <person name="Tanaka T."/>
            <person name="Ishii S."/>
            <person name="Yamamoto J."/>
            <person name="Saito K."/>
            <person name="Kawai Y."/>
            <person name="Isono Y."/>
            <person name="Nakamura Y."/>
            <person name="Nagahari K."/>
            <person name="Murakami K."/>
            <person name="Yasuda T."/>
            <person name="Iwayanagi T."/>
            <person name="Wagatsuma M."/>
            <person name="Shiratori A."/>
            <person name="Sudo H."/>
            <person name="Hosoiri T."/>
            <person name="Kaku Y."/>
            <person name="Kodaira H."/>
            <person name="Kondo H."/>
            <person name="Sugawara M."/>
            <person name="Takahashi M."/>
            <person name="Kanda K."/>
            <person name="Yokoi T."/>
            <person name="Furuya T."/>
            <person name="Kikkawa E."/>
            <person name="Omura Y."/>
            <person name="Abe K."/>
            <person name="Kamihara K."/>
            <person name="Katsuta N."/>
            <person name="Sato K."/>
            <person name="Tanikawa M."/>
            <person name="Yamazaki M."/>
            <person name="Ninomiya K."/>
            <person name="Ishibashi T."/>
            <person name="Yamashita H."/>
            <person name="Murakawa K."/>
            <person name="Fujimori K."/>
            <person name="Tanai H."/>
            <person name="Kimata M."/>
            <person name="Watanabe M."/>
            <person name="Hiraoka S."/>
            <person name="Chiba Y."/>
            <person name="Ishida S."/>
            <person name="Ono Y."/>
            <person name="Takiguchi S."/>
            <person name="Watanabe S."/>
            <person name="Yosida M."/>
            <person name="Hotuta T."/>
            <person name="Kusano J."/>
            <person name="Kanehori K."/>
            <person name="Takahashi-Fujii A."/>
            <person name="Hara H."/>
            <person name="Tanase T.-O."/>
            <person name="Nomura Y."/>
            <person name="Togiya S."/>
            <person name="Komai F."/>
            <person name="Hara R."/>
            <person name="Takeuchi K."/>
            <person name="Arita M."/>
            <person name="Imose N."/>
            <person name="Musashino K."/>
            <person name="Yuuki H."/>
            <person name="Oshima A."/>
            <person name="Sasaki N."/>
            <person name="Aotsuka S."/>
            <person name="Yoshikawa Y."/>
            <person name="Matsunawa H."/>
            <person name="Ichihara T."/>
            <person name="Shiohata N."/>
            <person name="Sano S."/>
            <person name="Moriya S."/>
            <person name="Momiyama H."/>
            <person name="Satoh N."/>
            <person name="Takami S."/>
            <person name="Terashima Y."/>
            <person name="Suzuki O."/>
            <person name="Nakagawa S."/>
            <person name="Senoh A."/>
            <person name="Mizoguchi H."/>
            <person name="Goto Y."/>
            <person name="Shimizu F."/>
            <person name="Wakebe H."/>
            <person name="Hishigaki H."/>
            <person name="Watanabe T."/>
            <person name="Sugiyama A."/>
            <person name="Takemoto M."/>
            <person name="Kawakami B."/>
            <person name="Yamazaki M."/>
            <person name="Watanabe K."/>
            <person name="Kumagai A."/>
            <person name="Itakura S."/>
            <person name="Fukuzumi Y."/>
            <person name="Fujimori Y."/>
            <person name="Komiyama M."/>
            <person name="Tashiro H."/>
            <person name="Tanigami A."/>
            <person name="Fujiwara T."/>
            <person name="Ono T."/>
            <person name="Yamada K."/>
            <person name="Fujii Y."/>
            <person name="Ozaki K."/>
            <person name="Hirao M."/>
            <person name="Ohmori Y."/>
            <person name="Kawabata A."/>
            <person name="Hikiji T."/>
            <person name="Kobatake N."/>
            <person name="Inagaki H."/>
            <person name="Ikema Y."/>
            <person name="Okamoto S."/>
            <person name="Okitani R."/>
            <person name="Kawakami T."/>
            <person name="Noguchi S."/>
            <person name="Itoh T."/>
            <person name="Shigeta K."/>
            <person name="Senba T."/>
            <person name="Matsumura K."/>
            <person name="Nakajima Y."/>
            <person name="Mizuno T."/>
            <person name="Morinaga M."/>
            <person name="Sasaki M."/>
            <person name="Togashi T."/>
            <person name="Oyama M."/>
            <person name="Hata H."/>
            <person name="Watanabe M."/>
            <person name="Komatsu T."/>
            <person name="Mizushima-Sugano J."/>
            <person name="Satoh T."/>
            <person name="Shirai Y."/>
            <person name="Takahashi Y."/>
            <person name="Nakagawa K."/>
            <person name="Okumura K."/>
            <person name="Nagase T."/>
            <person name="Nomura N."/>
            <person name="Kikuchi H."/>
            <person name="Masuho Y."/>
            <person name="Yamashita R."/>
            <person name="Nakai K."/>
            <person name="Yada T."/>
            <person name="Nakamura Y."/>
            <person name="Ohara O."/>
            <person name="Isogai T."/>
            <person name="Sugano S."/>
        </authorList>
    </citation>
    <scope>NUCLEOTIDE SEQUENCE [LARGE SCALE MRNA]</scope>
    <scope>VARIANT SER-8</scope>
    <source>
        <tissue>Tongue</tissue>
    </source>
</reference>
<reference key="8">
    <citation type="submission" date="2004-10" db="EMBL/GenBank/DDBJ databases">
        <authorList>
            <consortium name="NIEHS SNPs program"/>
        </authorList>
    </citation>
    <scope>NUCLEOTIDE SEQUENCE [GENOMIC DNA]</scope>
    <scope>VARIANTS THR-4; LYS-6; SER-8; VAL-233; ASN-273; TRP-302 AND ILE-355</scope>
</reference>
<reference key="9">
    <citation type="journal article" date="2003" name="Nature">
        <title>The DNA sequence and analysis of human chromosome 14.</title>
        <authorList>
            <person name="Heilig R."/>
            <person name="Eckenberg R."/>
            <person name="Petit J.-L."/>
            <person name="Fonknechten N."/>
            <person name="Da Silva C."/>
            <person name="Cattolico L."/>
            <person name="Levy M."/>
            <person name="Barbe V."/>
            <person name="De Berardinis V."/>
            <person name="Ureta-Vidal A."/>
            <person name="Pelletier E."/>
            <person name="Vico V."/>
            <person name="Anthouard V."/>
            <person name="Rowen L."/>
            <person name="Madan A."/>
            <person name="Qin S."/>
            <person name="Sun H."/>
            <person name="Du H."/>
            <person name="Pepin K."/>
            <person name="Artiguenave F."/>
            <person name="Robert C."/>
            <person name="Cruaud C."/>
            <person name="Bruels T."/>
            <person name="Jaillon O."/>
            <person name="Friedlander L."/>
            <person name="Samson G."/>
            <person name="Brottier P."/>
            <person name="Cure S."/>
            <person name="Segurens B."/>
            <person name="Aniere F."/>
            <person name="Samain S."/>
            <person name="Crespeau H."/>
            <person name="Abbasi N."/>
            <person name="Aiach N."/>
            <person name="Boscus D."/>
            <person name="Dickhoff R."/>
            <person name="Dors M."/>
            <person name="Dubois I."/>
            <person name="Friedman C."/>
            <person name="Gouyvenoux M."/>
            <person name="James R."/>
            <person name="Madan A."/>
            <person name="Mairey-Estrada B."/>
            <person name="Mangenot S."/>
            <person name="Martins N."/>
            <person name="Menard M."/>
            <person name="Oztas S."/>
            <person name="Ratcliffe A."/>
            <person name="Shaffer T."/>
            <person name="Trask B."/>
            <person name="Vacherie B."/>
            <person name="Bellemere C."/>
            <person name="Belser C."/>
            <person name="Besnard-Gonnet M."/>
            <person name="Bartol-Mavel D."/>
            <person name="Boutard M."/>
            <person name="Briez-Silla S."/>
            <person name="Combette S."/>
            <person name="Dufosse-Laurent V."/>
            <person name="Ferron C."/>
            <person name="Lechaplais C."/>
            <person name="Louesse C."/>
            <person name="Muselet D."/>
            <person name="Magdelenat G."/>
            <person name="Pateau E."/>
            <person name="Petit E."/>
            <person name="Sirvain-Trukniewicz P."/>
            <person name="Trybou A."/>
            <person name="Vega-Czarny N."/>
            <person name="Bataille E."/>
            <person name="Bluet E."/>
            <person name="Bordelais I."/>
            <person name="Dubois M."/>
            <person name="Dumont C."/>
            <person name="Guerin T."/>
            <person name="Haffray S."/>
            <person name="Hammadi R."/>
            <person name="Muanga J."/>
            <person name="Pellouin V."/>
            <person name="Robert D."/>
            <person name="Wunderle E."/>
            <person name="Gauguet G."/>
            <person name="Roy A."/>
            <person name="Sainte-Marthe L."/>
            <person name="Verdier J."/>
            <person name="Verdier-Discala C."/>
            <person name="Hillier L.W."/>
            <person name="Fulton L."/>
            <person name="McPherson J."/>
            <person name="Matsuda F."/>
            <person name="Wilson R."/>
            <person name="Scarpelli C."/>
            <person name="Gyapay G."/>
            <person name="Wincker P."/>
            <person name="Saurin W."/>
            <person name="Quetier F."/>
            <person name="Waterston R."/>
            <person name="Hood L."/>
            <person name="Weissenbach J."/>
        </authorList>
    </citation>
    <scope>NUCLEOTIDE SEQUENCE [LARGE SCALE GENOMIC DNA]</scope>
</reference>
<reference key="10">
    <citation type="journal article" date="2004" name="Genome Res.">
        <title>The status, quality, and expansion of the NIH full-length cDNA project: the Mammalian Gene Collection (MGC).</title>
        <authorList>
            <consortium name="The MGC Project Team"/>
        </authorList>
    </citation>
    <scope>NUCLEOTIDE SEQUENCE [LARGE SCALE MRNA]</scope>
    <scope>VARIANT SER-8</scope>
    <source>
        <tissue>Skin</tissue>
    </source>
</reference>
<reference key="11">
    <citation type="journal article" date="1996" name="FEBS Lett.">
        <title>Activation of a recombinant membrane type 1-matrix metalloproteinase (MT1-MMP) by furin and its interaction with tissue inhibitor of metalloproteinases (TIMP)-2.</title>
        <authorList>
            <person name="Sato H."/>
            <person name="Kinoshita T."/>
            <person name="Takino T."/>
            <person name="Nakayama K."/>
            <person name="Seiki M."/>
        </authorList>
    </citation>
    <scope>PROTEIN SEQUENCE OF 112-116</scope>
</reference>
<reference key="12">
    <citation type="journal article" date="2003" name="Invest. Ophthalmol. Vis. Sci.">
        <title>Production and activation of matrix metalloproteinase-2 in proliferative diabetic retinopathy.</title>
        <authorList>
            <person name="Noda K."/>
            <person name="Ishida S."/>
            <person name="Inoue M."/>
            <person name="Obata K."/>
            <person name="Oguchi Y."/>
            <person name="Okada Y."/>
            <person name="Ikeda E."/>
        </authorList>
    </citation>
    <scope>FUNCTION IN THE FORMATION OF THE FIBROVASCULAR TISSUES</scope>
</reference>
<reference key="13">
    <citation type="journal article" date="2006" name="J. Proteome Res.">
        <title>Proteomic and bioinformatic characterization of the biogenesis and function of melanosomes.</title>
        <authorList>
            <person name="Chi A."/>
            <person name="Valencia J.C."/>
            <person name="Hu Z.-Z."/>
            <person name="Watabe H."/>
            <person name="Yamaguchi H."/>
            <person name="Mangini N.J."/>
            <person name="Huang H."/>
            <person name="Canfield V.A."/>
            <person name="Cheng K.C."/>
            <person name="Yang F."/>
            <person name="Abe R."/>
            <person name="Yamagishi S."/>
            <person name="Shabanowitz J."/>
            <person name="Hearing V.J."/>
            <person name="Wu C."/>
            <person name="Appella E."/>
            <person name="Hunt D.F."/>
        </authorList>
    </citation>
    <scope>SUBCELLULAR LOCATION [LARGE SCALE ANALYSIS]</scope>
    <source>
        <tissue>Melanoma</tissue>
    </source>
</reference>
<reference key="14">
    <citation type="journal article" date="2008" name="Oncogene">
        <title>The E-cadherin-repressed hNanos1 gene induces tumor cell invasion by upregulating MT1-MMP expression.</title>
        <authorList>
            <person name="Bonnomet A."/>
            <person name="Polette M."/>
            <person name="Strumane K."/>
            <person name="Gilles C."/>
            <person name="Dalstein V."/>
            <person name="Kileztky C."/>
            <person name="Berx G."/>
            <person name="van Roy F."/>
            <person name="Birembaut P."/>
            <person name="Nawrocki-Raby B."/>
        </authorList>
    </citation>
    <scope>INDUCTION</scope>
    <scope>TISSUE SPECIFICITY</scope>
</reference>
<reference key="15">
    <citation type="journal article" date="2010" name="J. Biol. Chem.">
        <title>The Wnt/planar cell polarity protein-tyrosine kinase-7 (PTK7) is a highly efficient proteolytic target of membrane type-1 matrix metalloproteinase: implications in cancer and embryogenesis.</title>
        <authorList>
            <person name="Golubkov V.S."/>
            <person name="Chekanov A.V."/>
            <person name="Cieplak P."/>
            <person name="Aleshin A.E."/>
            <person name="Chernov A.V."/>
            <person name="Zhu W."/>
            <person name="Radichev I.A."/>
            <person name="Zhang D."/>
            <person name="Dong P.D."/>
            <person name="Strongin A.Y."/>
        </authorList>
    </citation>
    <scope>FUNCTION</scope>
</reference>
<reference key="16">
    <citation type="journal article" date="2011" name="EMBO J.">
        <title>MT1-MMP cleaves Dll1 to negatively regulate Notch signalling to maintain normal B-cell development.</title>
        <authorList>
            <person name="Jin G."/>
            <person name="Zhang F."/>
            <person name="Chan K.M."/>
            <person name="Xavier Wong H.L."/>
            <person name="Liu B."/>
            <person name="Cheah K.S."/>
            <person name="Liu X."/>
            <person name="Mauch C."/>
            <person name="Liu D."/>
            <person name="Zhou Z."/>
        </authorList>
    </citation>
    <scope>FUNCTION</scope>
</reference>
<reference key="17">
    <citation type="journal article" date="2012" name="J. Cell. Biochem.">
        <title>BST-2 binding with cellular MT1-MMP blocks cell growth and migration via decreasing MMP2 activity.</title>
        <authorList>
            <person name="Gu G."/>
            <person name="Zhao D."/>
            <person name="Yin Z."/>
            <person name="Liu P."/>
        </authorList>
    </citation>
    <scope>FUNCTION</scope>
    <scope>SUBCELLULAR LOCATION</scope>
    <scope>INTERACTION WITH BST2</scope>
</reference>
<reference key="18">
    <citation type="journal article" date="2012" name="Oncogene">
        <title>A proprotein convertase/MMP-14 proteolytic cascade releases a novel 40 kDa vasculostatin from tumor suppressor BAI1.</title>
        <authorList>
            <person name="Cork S.M."/>
            <person name="Kaur B."/>
            <person name="Devi N.S."/>
            <person name="Cooper L."/>
            <person name="Saltz J.H."/>
            <person name="Sandberg E.M."/>
            <person name="Kaluz S."/>
            <person name="Van Meir E.G."/>
        </authorList>
    </citation>
    <scope>FUNCTION</scope>
</reference>
<reference key="19">
    <citation type="journal article" date="2014" name="Cell">
        <title>A secreted tyrosine kinase acts in the extracellular environment.</title>
        <authorList>
            <person name="Bordoli M.R."/>
            <person name="Yum J."/>
            <person name="Breitkopf S.B."/>
            <person name="Thon J.N."/>
            <person name="Italiano J.E. Jr."/>
            <person name="Xiao J."/>
            <person name="Worby C."/>
            <person name="Wong S.K."/>
            <person name="Lin G."/>
            <person name="Edenius M."/>
            <person name="Keller T.L."/>
            <person name="Asara J.M."/>
            <person name="Dixon J.E."/>
            <person name="Yeo C.Y."/>
            <person name="Whitman M."/>
        </authorList>
    </citation>
    <scope>PHOSPHORYLATION AT TYR-399</scope>
</reference>
<reference key="20">
    <citation type="journal article" date="2022" name="Nat. Metab.">
        <title>Body weight regulation via MT1-MMP-mediated cleavage of GFRAL.</title>
        <authorList>
            <person name="Chow C.F.W."/>
            <person name="Guo X."/>
            <person name="Asthana P."/>
            <person name="Zhang S."/>
            <person name="Wong S.K.K."/>
            <person name="Fallah S."/>
            <person name="Che S."/>
            <person name="Gurung S."/>
            <person name="Wang Z."/>
            <person name="Lee K.B."/>
            <person name="Ge X."/>
            <person name="Yuan S."/>
            <person name="Xu H."/>
            <person name="Ip J.P.K."/>
            <person name="Jiang Z."/>
            <person name="Zhai L."/>
            <person name="Wu J."/>
            <person name="Zhang Y."/>
            <person name="Mahato A.K."/>
            <person name="Saarma M."/>
            <person name="Lin C.Y."/>
            <person name="Kwan H.Y."/>
            <person name="Huang T."/>
            <person name="Lyu A."/>
            <person name="Zhou Z."/>
            <person name="Bian Z.X."/>
            <person name="Wong H.L.X."/>
        </authorList>
    </citation>
    <scope>FUNCTION</scope>
    <scope>CATALYTIC ACTIVITY</scope>
    <scope>ACTIVE SITE</scope>
    <scope>MUTAGENESIS OF GLU-240</scope>
</reference>
<reference key="21">
    <citation type="journal article" date="1998" name="EMBO J.">
        <title>Crystal structure of the complex formed by the membrane type 1-matrix metalloproteinase with the tissue inhibitor of metalloproteinases-2, the soluble progelatinase A receptor.</title>
        <authorList>
            <person name="Fernandez-Catalan C."/>
            <person name="Bode W."/>
            <person name="Huber R."/>
            <person name="Turk D."/>
            <person name="Calvete J.J."/>
            <person name="Lichte A."/>
            <person name="Tschesche H."/>
            <person name="Maskos K."/>
        </authorList>
    </citation>
    <scope>X-RAY CRYSTALLOGRAPHY (2.75 ANGSTROMS) OF 114-287 IN COMPLEX WITH CALCIUM; ZINC AND TIMP2</scope>
    <scope>ACTIVE SITE</scope>
    <scope>COFACTOR</scope>
</reference>
<reference key="22">
    <citation type="journal article" date="2012" name="Am. J. Hum. Genet.">
        <title>Mutation of membrane type-1 metalloproteinase, MT1-MMP, causes the multicentric osteolysis and arthritis disease Winchester syndrome.</title>
        <authorList>
            <person name="Evans B.R."/>
            <person name="Mosig R.A."/>
            <person name="Lobl M."/>
            <person name="Martignetti C.R."/>
            <person name="Camacho C."/>
            <person name="Grum-Tokars V."/>
            <person name="Glucksman M.J."/>
            <person name="Martignetti J.A."/>
        </authorList>
    </citation>
    <scope>VARIANT WNCHRS ARG-17</scope>
    <scope>CHARACTERIZATION OF VARIANT WNCHRS ARG-17</scope>
</reference>
<evidence type="ECO:0000250" key="1">
    <source>
        <dbReference type="UniProtKB" id="P03956"/>
    </source>
</evidence>
<evidence type="ECO:0000250" key="2">
    <source>
        <dbReference type="UniProtKB" id="P08253"/>
    </source>
</evidence>
<evidence type="ECO:0000250" key="3">
    <source>
        <dbReference type="UniProtKB" id="P53690"/>
    </source>
</evidence>
<evidence type="ECO:0000255" key="4"/>
<evidence type="ECO:0000255" key="5">
    <source>
        <dbReference type="PROSITE-ProRule" id="PRU10095"/>
    </source>
</evidence>
<evidence type="ECO:0000256" key="6">
    <source>
        <dbReference type="SAM" id="MobiDB-lite"/>
    </source>
</evidence>
<evidence type="ECO:0000269" key="7">
    <source>
    </source>
</evidence>
<evidence type="ECO:0000269" key="8">
    <source>
    </source>
</evidence>
<evidence type="ECO:0000269" key="9">
    <source>
    </source>
</evidence>
<evidence type="ECO:0000269" key="10">
    <source>
    </source>
</evidence>
<evidence type="ECO:0000269" key="11">
    <source>
    </source>
</evidence>
<evidence type="ECO:0000269" key="12">
    <source>
    </source>
</evidence>
<evidence type="ECO:0000269" key="13">
    <source>
    </source>
</evidence>
<evidence type="ECO:0000269" key="14">
    <source>
    </source>
</evidence>
<evidence type="ECO:0000269" key="15">
    <source>
    </source>
</evidence>
<evidence type="ECO:0000269" key="16">
    <source>
    </source>
</evidence>
<evidence type="ECO:0000269" key="17">
    <source>
    </source>
</evidence>
<evidence type="ECO:0000269" key="18">
    <source>
    </source>
</evidence>
<evidence type="ECO:0000269" key="19">
    <source>
    </source>
</evidence>
<evidence type="ECO:0000269" key="20">
    <source>
    </source>
</evidence>
<evidence type="ECO:0000269" key="21">
    <source>
    </source>
</evidence>
<evidence type="ECO:0000269" key="22">
    <source>
    </source>
</evidence>
<evidence type="ECO:0000269" key="23">
    <source>
    </source>
</evidence>
<evidence type="ECO:0000269" key="24">
    <source>
    </source>
</evidence>
<evidence type="ECO:0000269" key="25">
    <source ref="8"/>
</evidence>
<evidence type="ECO:0000303" key="26">
    <source>
    </source>
</evidence>
<evidence type="ECO:0000303" key="27">
    <source>
    </source>
</evidence>
<evidence type="ECO:0000305" key="28"/>
<evidence type="ECO:0007744" key="29">
    <source>
        <dbReference type="PDB" id="1BQQ"/>
    </source>
</evidence>
<evidence type="ECO:0007744" key="30">
    <source>
        <dbReference type="PDB" id="1BUV"/>
    </source>
</evidence>
<evidence type="ECO:0007829" key="31">
    <source>
        <dbReference type="PDB" id="1BQQ"/>
    </source>
</evidence>
<evidence type="ECO:0007829" key="32">
    <source>
        <dbReference type="PDB" id="2MQS"/>
    </source>
</evidence>
<evidence type="ECO:0007829" key="33">
    <source>
        <dbReference type="PDB" id="3C7X"/>
    </source>
</evidence>
<evidence type="ECO:0007829" key="34">
    <source>
        <dbReference type="PDB" id="3MA2"/>
    </source>
</evidence>
<evidence type="ECO:0007829" key="35">
    <source>
        <dbReference type="PDB" id="3X23"/>
    </source>
</evidence>
<evidence type="ECO:0007829" key="36">
    <source>
        <dbReference type="PDB" id="5H0U"/>
    </source>
</evidence>
<evidence type="ECO:0007829" key="37">
    <source>
        <dbReference type="PDB" id="6CLZ"/>
    </source>
</evidence>
<evidence type="ECO:0007829" key="38">
    <source>
        <dbReference type="PDB" id="6CM1"/>
    </source>
</evidence>
<organism>
    <name type="scientific">Homo sapiens</name>
    <name type="common">Human</name>
    <dbReference type="NCBI Taxonomy" id="9606"/>
    <lineage>
        <taxon>Eukaryota</taxon>
        <taxon>Metazoa</taxon>
        <taxon>Chordata</taxon>
        <taxon>Craniata</taxon>
        <taxon>Vertebrata</taxon>
        <taxon>Euteleostomi</taxon>
        <taxon>Mammalia</taxon>
        <taxon>Eutheria</taxon>
        <taxon>Euarchontoglires</taxon>
        <taxon>Primates</taxon>
        <taxon>Haplorrhini</taxon>
        <taxon>Catarrhini</taxon>
        <taxon>Hominidae</taxon>
        <taxon>Homo</taxon>
    </lineage>
</organism>
<feature type="signal peptide" evidence="4">
    <location>
        <begin position="1"/>
        <end position="20"/>
    </location>
</feature>
<feature type="propeptide" id="PRO_0000028798" description="Activation peptide" evidence="23">
    <location>
        <begin position="21"/>
        <end position="111"/>
    </location>
</feature>
<feature type="chain" id="PRO_0000028799" description="Matrix metalloproteinase-14">
    <location>
        <begin position="112"/>
        <end position="582"/>
    </location>
</feature>
<feature type="topological domain" description="Extracellular" evidence="4">
    <location>
        <begin position="112"/>
        <end position="541"/>
    </location>
</feature>
<feature type="transmembrane region" description="Helical" evidence="4">
    <location>
        <begin position="542"/>
        <end position="562"/>
    </location>
</feature>
<feature type="topological domain" description="Cytoplasmic" evidence="4">
    <location>
        <begin position="563"/>
        <end position="582"/>
    </location>
</feature>
<feature type="repeat" description="Hemopexin 1">
    <location>
        <begin position="316"/>
        <end position="364"/>
    </location>
</feature>
<feature type="repeat" description="Hemopexin 2">
    <location>
        <begin position="365"/>
        <end position="410"/>
    </location>
</feature>
<feature type="repeat" description="Hemopexin 3">
    <location>
        <begin position="412"/>
        <end position="460"/>
    </location>
</feature>
<feature type="repeat" description="Hemopexin 4">
    <location>
        <begin position="461"/>
        <end position="508"/>
    </location>
</feature>
<feature type="region of interest" description="Disordered" evidence="6">
    <location>
        <begin position="284"/>
        <end position="316"/>
    </location>
</feature>
<feature type="short sequence motif" description="Cysteine switch" evidence="1">
    <location>
        <begin position="91"/>
        <end position="98"/>
    </location>
</feature>
<feature type="active site" evidence="5 18 24">
    <location>
        <position position="240"/>
    </location>
</feature>
<feature type="binding site" description="in inhibited form" evidence="1">
    <location>
        <position position="93"/>
    </location>
    <ligand>
        <name>Zn(2+)</name>
        <dbReference type="ChEBI" id="CHEBI:29105"/>
        <label>2</label>
        <note>catalytic</note>
    </ligand>
</feature>
<feature type="binding site" evidence="24 29 30">
    <location>
        <position position="186"/>
    </location>
    <ligand>
        <name>Zn(2+)</name>
        <dbReference type="ChEBI" id="CHEBI:29105"/>
        <label>1</label>
        <note>structural</note>
    </ligand>
</feature>
<feature type="binding site" evidence="24 29 30">
    <location>
        <position position="188"/>
    </location>
    <ligand>
        <name>Zn(2+)</name>
        <dbReference type="ChEBI" id="CHEBI:29105"/>
        <label>1</label>
        <note>structural</note>
    </ligand>
</feature>
<feature type="binding site" evidence="24 29 30">
    <location>
        <position position="193"/>
    </location>
    <ligand>
        <name>Ca(2+)</name>
        <dbReference type="ChEBI" id="CHEBI:29108"/>
        <label>2</label>
    </ligand>
</feature>
<feature type="binding site" evidence="24 29 30">
    <location>
        <position position="194"/>
    </location>
    <ligand>
        <name>Ca(2+)</name>
        <dbReference type="ChEBI" id="CHEBI:29108"/>
        <label>2</label>
    </ligand>
</feature>
<feature type="binding site" evidence="24 29 30">
    <location>
        <position position="196"/>
    </location>
    <ligand>
        <name>Ca(2+)</name>
        <dbReference type="ChEBI" id="CHEBI:29108"/>
        <label>2</label>
    </ligand>
</feature>
<feature type="binding site" evidence="24 29 30">
    <location>
        <position position="198"/>
    </location>
    <ligand>
        <name>Ca(2+)</name>
        <dbReference type="ChEBI" id="CHEBI:29108"/>
        <label>2</label>
    </ligand>
</feature>
<feature type="binding site" evidence="24 29 30">
    <location>
        <position position="201"/>
    </location>
    <ligand>
        <name>Zn(2+)</name>
        <dbReference type="ChEBI" id="CHEBI:29105"/>
        <label>1</label>
        <note>structural</note>
    </ligand>
</feature>
<feature type="binding site" evidence="24 29 30">
    <location>
        <position position="208"/>
    </location>
    <ligand>
        <name>Ca(2+)</name>
        <dbReference type="ChEBI" id="CHEBI:29108"/>
        <label>1</label>
    </ligand>
</feature>
<feature type="binding site" evidence="24 29 30">
    <location>
        <position position="210"/>
    </location>
    <ligand>
        <name>Ca(2+)</name>
        <dbReference type="ChEBI" id="CHEBI:29108"/>
        <label>1</label>
    </ligand>
</feature>
<feature type="binding site" evidence="24 29 30">
    <location>
        <position position="212"/>
    </location>
    <ligand>
        <name>Ca(2+)</name>
        <dbReference type="ChEBI" id="CHEBI:29108"/>
        <label>1</label>
    </ligand>
</feature>
<feature type="binding site" evidence="24 29 30">
    <location>
        <position position="214"/>
    </location>
    <ligand>
        <name>Zn(2+)</name>
        <dbReference type="ChEBI" id="CHEBI:29105"/>
        <label>1</label>
        <note>structural</note>
    </ligand>
</feature>
<feature type="binding site" evidence="24 29 30">
    <location>
        <position position="216"/>
    </location>
    <ligand>
        <name>Ca(2+)</name>
        <dbReference type="ChEBI" id="CHEBI:29108"/>
        <label>2</label>
    </ligand>
</feature>
<feature type="binding site" evidence="24 29 30">
    <location>
        <position position="219"/>
    </location>
    <ligand>
        <name>Ca(2+)</name>
        <dbReference type="ChEBI" id="CHEBI:29108"/>
        <label>2</label>
    </ligand>
</feature>
<feature type="binding site" evidence="24 29 30">
    <location>
        <position position="239"/>
    </location>
    <ligand>
        <name>Zn(2+)</name>
        <dbReference type="ChEBI" id="CHEBI:29105"/>
        <label>2</label>
        <note>catalytic</note>
    </ligand>
</feature>
<feature type="binding site" evidence="24 29 30">
    <location>
        <position position="243"/>
    </location>
    <ligand>
        <name>Zn(2+)</name>
        <dbReference type="ChEBI" id="CHEBI:29105"/>
        <label>2</label>
        <note>catalytic</note>
    </ligand>
</feature>
<feature type="binding site" evidence="24 29 30">
    <location>
        <position position="249"/>
    </location>
    <ligand>
        <name>Zn(2+)</name>
        <dbReference type="ChEBI" id="CHEBI:29105"/>
        <label>2</label>
        <note>catalytic</note>
    </ligand>
</feature>
<feature type="modified residue" description="Phosphotyrosine; by PKDCC" evidence="26">
    <location>
        <position position="399"/>
    </location>
</feature>
<feature type="disulfide bond" evidence="2">
    <location>
        <begin position="319"/>
        <end position="508"/>
    </location>
</feature>
<feature type="sequence variant" id="VAR_021029" description="In dbSNP:rs17882219." evidence="25">
    <original>A</original>
    <variation>T</variation>
    <location>
        <position position="4"/>
    </location>
</feature>
<feature type="sequence variant" id="VAR_021030" description="In dbSNP:rs17884647." evidence="25">
    <original>R</original>
    <variation>K</variation>
    <location>
        <position position="6"/>
    </location>
</feature>
<feature type="sequence variant" id="VAR_021031" description="In dbSNP:rs1042703." evidence="8 9 19 20 21 22 25">
    <original>P</original>
    <variation>S</variation>
    <location>
        <position position="8"/>
    </location>
</feature>
<feature type="sequence variant" id="VAR_070567" description="In WNCHRS; results in increased MMP14 proteasomal degradation and reduced protein localization to cell membrane; dbSNP:rs587777039." evidence="16">
    <original>T</original>
    <variation>R</variation>
    <location>
        <position position="17"/>
    </location>
</feature>
<feature type="sequence variant" id="VAR_021032" description="In dbSNP:rs17884841." evidence="25">
    <original>I</original>
    <variation>V</variation>
    <location>
        <position position="233"/>
    </location>
</feature>
<feature type="sequence variant" id="VAR_021033" description="In dbSNP:rs1042704." evidence="25">
    <original>D</original>
    <variation>N</variation>
    <location>
        <position position="273"/>
    </location>
</feature>
<feature type="sequence variant" id="VAR_021034" description="In dbSNP:rs17884719." evidence="25">
    <original>R</original>
    <variation>W</variation>
    <location>
        <position position="302"/>
    </location>
</feature>
<feature type="sequence variant" id="VAR_021035" description="In dbSNP:rs17880989." evidence="25">
    <original>M</original>
    <variation>I</variation>
    <location>
        <position position="355"/>
    </location>
</feature>
<feature type="sequence variant" id="VAR_031267" description="In dbSNP:rs3751489.">
    <original>R</original>
    <variation>H</variation>
    <location>
        <position position="431"/>
    </location>
</feature>
<feature type="mutagenesis site" description="In MT1 EA mutant; abolished endopeptidase activity." evidence="18">
    <original>E</original>
    <variation>A</variation>
    <location>
        <position position="240"/>
    </location>
</feature>
<feature type="sequence conflict" description="In Ref. 1; BAA05519." evidence="28" ref="1">
    <original>E</original>
    <variation>K</variation>
    <location>
        <position position="338"/>
    </location>
</feature>
<feature type="sequence conflict" description="In Ref. 6; CAA62432." evidence="28" ref="6">
    <original>S</original>
    <variation>P</variation>
    <location>
        <position position="500"/>
    </location>
</feature>
<feature type="strand" evidence="34">
    <location>
        <begin position="120"/>
        <end position="128"/>
    </location>
</feature>
<feature type="turn" evidence="34">
    <location>
        <begin position="133"/>
        <end position="135"/>
    </location>
</feature>
<feature type="helix" evidence="34">
    <location>
        <begin position="137"/>
        <end position="154"/>
    </location>
</feature>
<feature type="strand" evidence="34">
    <location>
        <begin position="158"/>
        <end position="161"/>
    </location>
</feature>
<feature type="helix" evidence="34">
    <location>
        <begin position="164"/>
        <end position="168"/>
    </location>
</feature>
<feature type="strand" evidence="31">
    <location>
        <begin position="171"/>
        <end position="173"/>
    </location>
</feature>
<feature type="strand" evidence="34">
    <location>
        <begin position="176"/>
        <end position="182"/>
    </location>
</feature>
<feature type="strand" evidence="34">
    <location>
        <begin position="187"/>
        <end position="190"/>
    </location>
</feature>
<feature type="strand" evidence="34">
    <location>
        <begin position="194"/>
        <end position="202"/>
    </location>
</feature>
<feature type="strand" evidence="36">
    <location>
        <begin position="205"/>
        <end position="207"/>
    </location>
</feature>
<feature type="turn" evidence="34">
    <location>
        <begin position="208"/>
        <end position="211"/>
    </location>
</feature>
<feature type="strand" evidence="34">
    <location>
        <begin position="213"/>
        <end position="216"/>
    </location>
</feature>
<feature type="strand" evidence="36">
    <location>
        <begin position="221"/>
        <end position="223"/>
    </location>
</feature>
<feature type="strand" evidence="34">
    <location>
        <begin position="230"/>
        <end position="232"/>
    </location>
</feature>
<feature type="helix" evidence="34">
    <location>
        <begin position="233"/>
        <end position="244"/>
    </location>
</feature>
<feature type="strand" evidence="34">
    <location>
        <begin position="258"/>
        <end position="260"/>
    </location>
</feature>
<feature type="helix" evidence="34">
    <location>
        <begin position="273"/>
        <end position="283"/>
    </location>
</feature>
<feature type="helix" evidence="33">
    <location>
        <begin position="318"/>
        <end position="320"/>
    </location>
</feature>
<feature type="strand" evidence="33">
    <location>
        <begin position="324"/>
        <end position="329"/>
    </location>
</feature>
<feature type="strand" evidence="33">
    <location>
        <begin position="332"/>
        <end position="337"/>
    </location>
</feature>
<feature type="strand" evidence="33">
    <location>
        <begin position="340"/>
        <end position="345"/>
    </location>
</feature>
<feature type="strand" evidence="33">
    <location>
        <begin position="354"/>
        <end position="356"/>
    </location>
</feature>
<feature type="helix" evidence="33">
    <location>
        <begin position="357"/>
        <end position="360"/>
    </location>
</feature>
<feature type="strand" evidence="33">
    <location>
        <begin position="370"/>
        <end position="373"/>
    </location>
</feature>
<feature type="strand" evidence="32">
    <location>
        <begin position="375"/>
        <end position="377"/>
    </location>
</feature>
<feature type="strand" evidence="33">
    <location>
        <begin position="379"/>
        <end position="383"/>
    </location>
</feature>
<feature type="strand" evidence="33">
    <location>
        <begin position="386"/>
        <end position="391"/>
    </location>
</feature>
<feature type="strand" evidence="38">
    <location>
        <begin position="392"/>
        <end position="395"/>
    </location>
</feature>
<feature type="strand" evidence="33">
    <location>
        <begin position="400"/>
        <end position="402"/>
    </location>
</feature>
<feature type="helix" evidence="33">
    <location>
        <begin position="403"/>
        <end position="405"/>
    </location>
</feature>
<feature type="strand" evidence="33">
    <location>
        <begin position="416"/>
        <end position="420"/>
    </location>
</feature>
<feature type="turn" evidence="33">
    <location>
        <begin position="422"/>
        <end position="424"/>
    </location>
</feature>
<feature type="strand" evidence="33">
    <location>
        <begin position="427"/>
        <end position="431"/>
    </location>
</feature>
<feature type="strand" evidence="33">
    <location>
        <begin position="434"/>
        <end position="439"/>
    </location>
</feature>
<feature type="turn" evidence="33">
    <location>
        <begin position="440"/>
        <end position="443"/>
    </location>
</feature>
<feature type="strand" evidence="33">
    <location>
        <begin position="450"/>
        <end position="452"/>
    </location>
</feature>
<feature type="helix" evidence="33">
    <location>
        <begin position="453"/>
        <end position="455"/>
    </location>
</feature>
<feature type="strand" evidence="37">
    <location>
        <begin position="456"/>
        <end position="458"/>
    </location>
</feature>
<feature type="strand" evidence="33">
    <location>
        <begin position="464"/>
        <end position="468"/>
    </location>
</feature>
<feature type="strand" evidence="33">
    <location>
        <begin position="472"/>
        <end position="479"/>
    </location>
</feature>
<feature type="strand" evidence="33">
    <location>
        <begin position="482"/>
        <end position="487"/>
    </location>
</feature>
<feature type="turn" evidence="33">
    <location>
        <begin position="488"/>
        <end position="491"/>
    </location>
</feature>
<feature type="strand" evidence="37">
    <location>
        <begin position="498"/>
        <end position="500"/>
    </location>
</feature>
<feature type="helix" evidence="33">
    <location>
        <begin position="501"/>
        <end position="504"/>
    </location>
</feature>
<feature type="strand" evidence="35">
    <location>
        <begin position="569"/>
        <end position="575"/>
    </location>
</feature>
<proteinExistence type="evidence at protein level"/>